<keyword id="KW-0067">ATP-binding</keyword>
<keyword id="KW-0347">Helicase</keyword>
<keyword id="KW-0378">Hydrolase</keyword>
<keyword id="KW-0391">Immunity</keyword>
<keyword id="KW-0399">Innate immunity</keyword>
<keyword id="KW-0507">mRNA processing</keyword>
<keyword id="KW-0508">mRNA splicing</keyword>
<keyword id="KW-0547">Nucleotide-binding</keyword>
<keyword id="KW-1185">Reference proteome</keyword>
<keyword id="KW-0694">RNA-binding</keyword>
<organism>
    <name type="scientific">Drosophila melanogaster</name>
    <name type="common">Fruit fly</name>
    <dbReference type="NCBI Taxonomy" id="7227"/>
    <lineage>
        <taxon>Eukaryota</taxon>
        <taxon>Metazoa</taxon>
        <taxon>Ecdysozoa</taxon>
        <taxon>Arthropoda</taxon>
        <taxon>Hexapoda</taxon>
        <taxon>Insecta</taxon>
        <taxon>Pterygota</taxon>
        <taxon>Neoptera</taxon>
        <taxon>Endopterygota</taxon>
        <taxon>Diptera</taxon>
        <taxon>Brachycera</taxon>
        <taxon>Muscomorpha</taxon>
        <taxon>Ephydroidea</taxon>
        <taxon>Drosophilidae</taxon>
        <taxon>Drosophila</taxon>
        <taxon>Sophophora</taxon>
    </lineage>
</organism>
<accession>Q7K3M5</accession>
<dbReference type="EC" id="3.6.4.13" evidence="1"/>
<dbReference type="EMBL" id="AE013599">
    <property type="protein sequence ID" value="AAF59269.1"/>
    <property type="molecule type" value="Genomic_DNA"/>
</dbReference>
<dbReference type="EMBL" id="AE013599">
    <property type="protein sequence ID" value="AGB93299.1"/>
    <property type="molecule type" value="Genomic_DNA"/>
</dbReference>
<dbReference type="EMBL" id="AY058484">
    <property type="protein sequence ID" value="AAL13713.1"/>
    <property type="molecule type" value="mRNA"/>
</dbReference>
<dbReference type="RefSeq" id="NP_001260766.1">
    <property type="nucleotide sequence ID" value="NM_001273837.1"/>
</dbReference>
<dbReference type="RefSeq" id="NP_610269.1">
    <property type="nucleotide sequence ID" value="NM_136425.3"/>
</dbReference>
<dbReference type="SMR" id="Q7K3M5"/>
<dbReference type="FunCoup" id="Q7K3M5">
    <property type="interactions" value="2911"/>
</dbReference>
<dbReference type="IntAct" id="Q7K3M5">
    <property type="interactions" value="64"/>
</dbReference>
<dbReference type="STRING" id="7227.FBpp0088040"/>
<dbReference type="PaxDb" id="7227-FBpp0088040"/>
<dbReference type="DNASU" id="35654"/>
<dbReference type="EnsemblMetazoa" id="FBtr0088966">
    <property type="protein sequence ID" value="FBpp0088040"/>
    <property type="gene ID" value="FBgn0033160"/>
</dbReference>
<dbReference type="EnsemblMetazoa" id="FBtr0336909">
    <property type="protein sequence ID" value="FBpp0307849"/>
    <property type="gene ID" value="FBgn0033160"/>
</dbReference>
<dbReference type="GeneID" id="35654"/>
<dbReference type="KEGG" id="dme:Dmel_CG11107"/>
<dbReference type="UCSC" id="CG11107-RA">
    <property type="organism name" value="d. melanogaster"/>
</dbReference>
<dbReference type="AGR" id="FB:FBgn0033160"/>
<dbReference type="CTD" id="1665"/>
<dbReference type="FlyBase" id="FBgn0033160">
    <property type="gene designation" value="Dhx15"/>
</dbReference>
<dbReference type="VEuPathDB" id="VectorBase:FBgn0033160"/>
<dbReference type="eggNOG" id="KOG0925">
    <property type="taxonomic scope" value="Eukaryota"/>
</dbReference>
<dbReference type="GeneTree" id="ENSGT00940000155800"/>
<dbReference type="HOGENOM" id="CLU_001832_5_11_1"/>
<dbReference type="InParanoid" id="Q7K3M5"/>
<dbReference type="OMA" id="MKVYPLY"/>
<dbReference type="OrthoDB" id="10253254at2759"/>
<dbReference type="PhylomeDB" id="Q7K3M5"/>
<dbReference type="Reactome" id="R-DME-72163">
    <property type="pathway name" value="mRNA Splicing - Major Pathway"/>
</dbReference>
<dbReference type="BioGRID-ORCS" id="35654">
    <property type="hits" value="1 hit in 1 CRISPR screen"/>
</dbReference>
<dbReference type="GenomeRNAi" id="35654"/>
<dbReference type="PRO" id="PR:Q7K3M5"/>
<dbReference type="Proteomes" id="UP000000803">
    <property type="component" value="Chromosome 2R"/>
</dbReference>
<dbReference type="Bgee" id="FBgn0033160">
    <property type="expression patterns" value="Expressed in wing disc and 125 other cell types or tissues"/>
</dbReference>
<dbReference type="ExpressionAtlas" id="Q7K3M5">
    <property type="expression patterns" value="baseline and differential"/>
</dbReference>
<dbReference type="GO" id="GO:0071013">
    <property type="term" value="C:catalytic step 2 spliceosome"/>
    <property type="evidence" value="ECO:0007005"/>
    <property type="project" value="FlyBase"/>
</dbReference>
<dbReference type="GO" id="GO:0071011">
    <property type="term" value="C:precatalytic spliceosome"/>
    <property type="evidence" value="ECO:0007005"/>
    <property type="project" value="FlyBase"/>
</dbReference>
<dbReference type="GO" id="GO:0005681">
    <property type="term" value="C:spliceosomal complex"/>
    <property type="evidence" value="ECO:0000250"/>
    <property type="project" value="FlyBase"/>
</dbReference>
<dbReference type="GO" id="GO:0005524">
    <property type="term" value="F:ATP binding"/>
    <property type="evidence" value="ECO:0007669"/>
    <property type="project" value="UniProtKB-KW"/>
</dbReference>
<dbReference type="GO" id="GO:0004386">
    <property type="term" value="F:helicase activity"/>
    <property type="evidence" value="ECO:0000318"/>
    <property type="project" value="GO_Central"/>
</dbReference>
<dbReference type="GO" id="GO:0016787">
    <property type="term" value="F:hydrolase activity"/>
    <property type="evidence" value="ECO:0007669"/>
    <property type="project" value="UniProtKB-KW"/>
</dbReference>
<dbReference type="GO" id="GO:0003723">
    <property type="term" value="F:RNA binding"/>
    <property type="evidence" value="ECO:0000318"/>
    <property type="project" value="GO_Central"/>
</dbReference>
<dbReference type="GO" id="GO:0003724">
    <property type="term" value="F:RNA helicase activity"/>
    <property type="evidence" value="ECO:0000250"/>
    <property type="project" value="FlyBase"/>
</dbReference>
<dbReference type="GO" id="GO:0045087">
    <property type="term" value="P:innate immune response"/>
    <property type="evidence" value="ECO:0007669"/>
    <property type="project" value="UniProtKB-KW"/>
</dbReference>
<dbReference type="GO" id="GO:0000398">
    <property type="term" value="P:mRNA splicing, via spliceosome"/>
    <property type="evidence" value="ECO:0000250"/>
    <property type="project" value="FlyBase"/>
</dbReference>
<dbReference type="GO" id="GO:1900745">
    <property type="term" value="P:positive regulation of p38MAPK cascade"/>
    <property type="evidence" value="ECO:0000316"/>
    <property type="project" value="FlyBase"/>
</dbReference>
<dbReference type="CDD" id="cd17973">
    <property type="entry name" value="DEXHc_DHX15"/>
    <property type="match status" value="1"/>
</dbReference>
<dbReference type="CDD" id="cd18791">
    <property type="entry name" value="SF2_C_RHA"/>
    <property type="match status" value="1"/>
</dbReference>
<dbReference type="FunFam" id="1.10.10.2130:FF:000001">
    <property type="entry name" value="Pre-mRNA-splicing factor ATP-dependent RNA helicase"/>
    <property type="match status" value="1"/>
</dbReference>
<dbReference type="FunFam" id="3.40.50.300:FF:000324">
    <property type="entry name" value="pre-mRNA-splicing factor ATP-dependent RNA helicase DHX15"/>
    <property type="match status" value="1"/>
</dbReference>
<dbReference type="FunFam" id="1.20.120.1080:FF:000003">
    <property type="entry name" value="Pre-mRNA-splicing factor ATP-dependent RNA helicase PRP43"/>
    <property type="match status" value="1"/>
</dbReference>
<dbReference type="FunFam" id="3.40.50.300:FF:006066">
    <property type="entry name" value="Predicted protein"/>
    <property type="match status" value="1"/>
</dbReference>
<dbReference type="Gene3D" id="1.20.120.1080">
    <property type="match status" value="1"/>
</dbReference>
<dbReference type="Gene3D" id="3.40.50.300">
    <property type="entry name" value="P-loop containing nucleotide triphosphate hydrolases"/>
    <property type="match status" value="2"/>
</dbReference>
<dbReference type="InterPro" id="IPR011709">
    <property type="entry name" value="DEAD-box_helicase_OB_fold"/>
</dbReference>
<dbReference type="InterPro" id="IPR011545">
    <property type="entry name" value="DEAD/DEAH_box_helicase_dom"/>
</dbReference>
<dbReference type="InterPro" id="IPR044756">
    <property type="entry name" value="DHX15_DEXHc"/>
</dbReference>
<dbReference type="InterPro" id="IPR048333">
    <property type="entry name" value="HA2_WH"/>
</dbReference>
<dbReference type="InterPro" id="IPR007502">
    <property type="entry name" value="Helicase-assoc_dom"/>
</dbReference>
<dbReference type="InterPro" id="IPR014001">
    <property type="entry name" value="Helicase_ATP-bd"/>
</dbReference>
<dbReference type="InterPro" id="IPR001650">
    <property type="entry name" value="Helicase_C-like"/>
</dbReference>
<dbReference type="InterPro" id="IPR027417">
    <property type="entry name" value="P-loop_NTPase"/>
</dbReference>
<dbReference type="PANTHER" id="PTHR18934">
    <property type="entry name" value="ATP-DEPENDENT RNA HELICASE"/>
    <property type="match status" value="1"/>
</dbReference>
<dbReference type="PANTHER" id="PTHR18934:SF109">
    <property type="entry name" value="ATP-DEPENDENT RNA HELICASE DHX15 HOMOLOG"/>
    <property type="match status" value="1"/>
</dbReference>
<dbReference type="Pfam" id="PF00270">
    <property type="entry name" value="DEAD"/>
    <property type="match status" value="1"/>
</dbReference>
<dbReference type="Pfam" id="PF21010">
    <property type="entry name" value="HA2_C"/>
    <property type="match status" value="1"/>
</dbReference>
<dbReference type="Pfam" id="PF04408">
    <property type="entry name" value="HA2_N"/>
    <property type="match status" value="1"/>
</dbReference>
<dbReference type="Pfam" id="PF00271">
    <property type="entry name" value="Helicase_C"/>
    <property type="match status" value="1"/>
</dbReference>
<dbReference type="Pfam" id="PF07717">
    <property type="entry name" value="OB_NTP_bind"/>
    <property type="match status" value="1"/>
</dbReference>
<dbReference type="SMART" id="SM00487">
    <property type="entry name" value="DEXDc"/>
    <property type="match status" value="1"/>
</dbReference>
<dbReference type="SMART" id="SM00847">
    <property type="entry name" value="HA2"/>
    <property type="match status" value="1"/>
</dbReference>
<dbReference type="SMART" id="SM00490">
    <property type="entry name" value="HELICc"/>
    <property type="match status" value="1"/>
</dbReference>
<dbReference type="SUPFAM" id="SSF52540">
    <property type="entry name" value="P-loop containing nucleoside triphosphate hydrolases"/>
    <property type="match status" value="1"/>
</dbReference>
<dbReference type="PROSITE" id="PS51192">
    <property type="entry name" value="HELICASE_ATP_BIND_1"/>
    <property type="match status" value="1"/>
</dbReference>
<dbReference type="PROSITE" id="PS51194">
    <property type="entry name" value="HELICASE_CTER"/>
    <property type="match status" value="1"/>
</dbReference>
<gene>
    <name evidence="7" type="primary">Dhx15</name>
    <name evidence="7" type="ORF">CG11107</name>
</gene>
<feature type="chain" id="PRO_0000455079" description="ATP-dependent RNA helicase DHX15 homolog">
    <location>
        <begin position="1"/>
        <end position="729"/>
    </location>
</feature>
<feature type="domain" description="Helicase ATP-binding" evidence="2">
    <location>
        <begin position="82"/>
        <end position="246"/>
    </location>
</feature>
<feature type="domain" description="Helicase C-terminal" evidence="3">
    <location>
        <begin position="271"/>
        <end position="451"/>
    </location>
</feature>
<feature type="region of interest" description="Disordered" evidence="4">
    <location>
        <begin position="1"/>
        <end position="25"/>
    </location>
</feature>
<feature type="short sequence motif" description="DEAH box" evidence="2">
    <location>
        <begin position="193"/>
        <end position="196"/>
    </location>
</feature>
<feature type="binding site" evidence="2">
    <location>
        <begin position="95"/>
        <end position="102"/>
    </location>
    <ligand>
        <name>ATP</name>
        <dbReference type="ChEBI" id="CHEBI:30616"/>
    </ligand>
</feature>
<protein>
    <recommendedName>
        <fullName evidence="6">ATP-dependent RNA helicase DHX15 homolog</fullName>
        <ecNumber evidence="1">3.6.4.13</ecNumber>
    </recommendedName>
</protein>
<reference key="1">
    <citation type="journal article" date="2000" name="Science">
        <title>The genome sequence of Drosophila melanogaster.</title>
        <authorList>
            <person name="Adams M.D."/>
            <person name="Celniker S.E."/>
            <person name="Holt R.A."/>
            <person name="Evans C.A."/>
            <person name="Gocayne J.D."/>
            <person name="Amanatides P.G."/>
            <person name="Scherer S.E."/>
            <person name="Li P.W."/>
            <person name="Hoskins R.A."/>
            <person name="Galle R.F."/>
            <person name="George R.A."/>
            <person name="Lewis S.E."/>
            <person name="Richards S."/>
            <person name="Ashburner M."/>
            <person name="Henderson S.N."/>
            <person name="Sutton G.G."/>
            <person name="Wortman J.R."/>
            <person name="Yandell M.D."/>
            <person name="Zhang Q."/>
            <person name="Chen L.X."/>
            <person name="Brandon R.C."/>
            <person name="Rogers Y.-H.C."/>
            <person name="Blazej R.G."/>
            <person name="Champe M."/>
            <person name="Pfeiffer B.D."/>
            <person name="Wan K.H."/>
            <person name="Doyle C."/>
            <person name="Baxter E.G."/>
            <person name="Helt G."/>
            <person name="Nelson C.R."/>
            <person name="Miklos G.L.G."/>
            <person name="Abril J.F."/>
            <person name="Agbayani A."/>
            <person name="An H.-J."/>
            <person name="Andrews-Pfannkoch C."/>
            <person name="Baldwin D."/>
            <person name="Ballew R.M."/>
            <person name="Basu A."/>
            <person name="Baxendale J."/>
            <person name="Bayraktaroglu L."/>
            <person name="Beasley E.M."/>
            <person name="Beeson K.Y."/>
            <person name="Benos P.V."/>
            <person name="Berman B.P."/>
            <person name="Bhandari D."/>
            <person name="Bolshakov S."/>
            <person name="Borkova D."/>
            <person name="Botchan M.R."/>
            <person name="Bouck J."/>
            <person name="Brokstein P."/>
            <person name="Brottier P."/>
            <person name="Burtis K.C."/>
            <person name="Busam D.A."/>
            <person name="Butler H."/>
            <person name="Cadieu E."/>
            <person name="Center A."/>
            <person name="Chandra I."/>
            <person name="Cherry J.M."/>
            <person name="Cawley S."/>
            <person name="Dahlke C."/>
            <person name="Davenport L.B."/>
            <person name="Davies P."/>
            <person name="de Pablos B."/>
            <person name="Delcher A."/>
            <person name="Deng Z."/>
            <person name="Mays A.D."/>
            <person name="Dew I."/>
            <person name="Dietz S.M."/>
            <person name="Dodson K."/>
            <person name="Doup L.E."/>
            <person name="Downes M."/>
            <person name="Dugan-Rocha S."/>
            <person name="Dunkov B.C."/>
            <person name="Dunn P."/>
            <person name="Durbin K.J."/>
            <person name="Evangelista C.C."/>
            <person name="Ferraz C."/>
            <person name="Ferriera S."/>
            <person name="Fleischmann W."/>
            <person name="Fosler C."/>
            <person name="Gabrielian A.E."/>
            <person name="Garg N.S."/>
            <person name="Gelbart W.M."/>
            <person name="Glasser K."/>
            <person name="Glodek A."/>
            <person name="Gong F."/>
            <person name="Gorrell J.H."/>
            <person name="Gu Z."/>
            <person name="Guan P."/>
            <person name="Harris M."/>
            <person name="Harris N.L."/>
            <person name="Harvey D.A."/>
            <person name="Heiman T.J."/>
            <person name="Hernandez J.R."/>
            <person name="Houck J."/>
            <person name="Hostin D."/>
            <person name="Houston K.A."/>
            <person name="Howland T.J."/>
            <person name="Wei M.-H."/>
            <person name="Ibegwam C."/>
            <person name="Jalali M."/>
            <person name="Kalush F."/>
            <person name="Karpen G.H."/>
            <person name="Ke Z."/>
            <person name="Kennison J.A."/>
            <person name="Ketchum K.A."/>
            <person name="Kimmel B.E."/>
            <person name="Kodira C.D."/>
            <person name="Kraft C.L."/>
            <person name="Kravitz S."/>
            <person name="Kulp D."/>
            <person name="Lai Z."/>
            <person name="Lasko P."/>
            <person name="Lei Y."/>
            <person name="Levitsky A.A."/>
            <person name="Li J.H."/>
            <person name="Li Z."/>
            <person name="Liang Y."/>
            <person name="Lin X."/>
            <person name="Liu X."/>
            <person name="Mattei B."/>
            <person name="McIntosh T.C."/>
            <person name="McLeod M.P."/>
            <person name="McPherson D."/>
            <person name="Merkulov G."/>
            <person name="Milshina N.V."/>
            <person name="Mobarry C."/>
            <person name="Morris J."/>
            <person name="Moshrefi A."/>
            <person name="Mount S.M."/>
            <person name="Moy M."/>
            <person name="Murphy B."/>
            <person name="Murphy L."/>
            <person name="Muzny D.M."/>
            <person name="Nelson D.L."/>
            <person name="Nelson D.R."/>
            <person name="Nelson K.A."/>
            <person name="Nixon K."/>
            <person name="Nusskern D.R."/>
            <person name="Pacleb J.M."/>
            <person name="Palazzolo M."/>
            <person name="Pittman G.S."/>
            <person name="Pan S."/>
            <person name="Pollard J."/>
            <person name="Puri V."/>
            <person name="Reese M.G."/>
            <person name="Reinert K."/>
            <person name="Remington K."/>
            <person name="Saunders R.D.C."/>
            <person name="Scheeler F."/>
            <person name="Shen H."/>
            <person name="Shue B.C."/>
            <person name="Siden-Kiamos I."/>
            <person name="Simpson M."/>
            <person name="Skupski M.P."/>
            <person name="Smith T.J."/>
            <person name="Spier E."/>
            <person name="Spradling A.C."/>
            <person name="Stapleton M."/>
            <person name="Strong R."/>
            <person name="Sun E."/>
            <person name="Svirskas R."/>
            <person name="Tector C."/>
            <person name="Turner R."/>
            <person name="Venter E."/>
            <person name="Wang A.H."/>
            <person name="Wang X."/>
            <person name="Wang Z.-Y."/>
            <person name="Wassarman D.A."/>
            <person name="Weinstock G.M."/>
            <person name="Weissenbach J."/>
            <person name="Williams S.M."/>
            <person name="Woodage T."/>
            <person name="Worley K.C."/>
            <person name="Wu D."/>
            <person name="Yang S."/>
            <person name="Yao Q.A."/>
            <person name="Ye J."/>
            <person name="Yeh R.-F."/>
            <person name="Zaveri J.S."/>
            <person name="Zhan M."/>
            <person name="Zhang G."/>
            <person name="Zhao Q."/>
            <person name="Zheng L."/>
            <person name="Zheng X.H."/>
            <person name="Zhong F.N."/>
            <person name="Zhong W."/>
            <person name="Zhou X."/>
            <person name="Zhu S.C."/>
            <person name="Zhu X."/>
            <person name="Smith H.O."/>
            <person name="Gibbs R.A."/>
            <person name="Myers E.W."/>
            <person name="Rubin G.M."/>
            <person name="Venter J.C."/>
        </authorList>
    </citation>
    <scope>NUCLEOTIDE SEQUENCE [LARGE SCALE GENOMIC DNA]</scope>
    <source>
        <strain>Berkeley</strain>
    </source>
</reference>
<reference key="2">
    <citation type="journal article" date="2002" name="Genome Biol.">
        <title>Annotation of the Drosophila melanogaster euchromatic genome: a systematic review.</title>
        <authorList>
            <person name="Misra S."/>
            <person name="Crosby M.A."/>
            <person name="Mungall C.J."/>
            <person name="Matthews B.B."/>
            <person name="Campbell K.S."/>
            <person name="Hradecky P."/>
            <person name="Huang Y."/>
            <person name="Kaminker J.S."/>
            <person name="Millburn G.H."/>
            <person name="Prochnik S.E."/>
            <person name="Smith C.D."/>
            <person name="Tupy J.L."/>
            <person name="Whitfield E.J."/>
            <person name="Bayraktaroglu L."/>
            <person name="Berman B.P."/>
            <person name="Bettencourt B.R."/>
            <person name="Celniker S.E."/>
            <person name="de Grey A.D.N.J."/>
            <person name="Drysdale R.A."/>
            <person name="Harris N.L."/>
            <person name="Richter J."/>
            <person name="Russo S."/>
            <person name="Schroeder A.J."/>
            <person name="Shu S.Q."/>
            <person name="Stapleton M."/>
            <person name="Yamada C."/>
            <person name="Ashburner M."/>
            <person name="Gelbart W.M."/>
            <person name="Rubin G.M."/>
            <person name="Lewis S.E."/>
        </authorList>
    </citation>
    <scope>GENOME REANNOTATION</scope>
    <source>
        <strain>Berkeley</strain>
    </source>
</reference>
<reference key="3">
    <citation type="journal article" date="2002" name="Genome Biol.">
        <title>A Drosophila full-length cDNA resource.</title>
        <authorList>
            <person name="Stapleton M."/>
            <person name="Carlson J.W."/>
            <person name="Brokstein P."/>
            <person name="Yu C."/>
            <person name="Champe M."/>
            <person name="George R.A."/>
            <person name="Guarin H."/>
            <person name="Kronmiller B."/>
            <person name="Pacleb J.M."/>
            <person name="Park S."/>
            <person name="Wan K.H."/>
            <person name="Rubin G.M."/>
            <person name="Celniker S.E."/>
        </authorList>
    </citation>
    <scope>NUCLEOTIDE SEQUENCE [LARGE SCALE MRNA]</scope>
    <source>
        <strain>Berkeley</strain>
        <tissue>Ovary</tissue>
    </source>
</reference>
<reference key="4">
    <citation type="journal article" date="2014" name="Sci. Signal.">
        <title>The DEAH-box RNA helicase DHX15 activates NF-kappaB and MAPK signaling downstream of MAVS during antiviral responses.</title>
        <authorList>
            <person name="Mosallanejad K."/>
            <person name="Sekine Y."/>
            <person name="Ishikura-Kinoshita S."/>
            <person name="Kumagai K."/>
            <person name="Nagano T."/>
            <person name="Matsuzawa A."/>
            <person name="Takeda K."/>
            <person name="Naguro I."/>
            <person name="Ichijo H."/>
        </authorList>
    </citation>
    <scope>FUNCTION</scope>
</reference>
<evidence type="ECO:0000250" key="1">
    <source>
        <dbReference type="UniProtKB" id="O43143"/>
    </source>
</evidence>
<evidence type="ECO:0000255" key="2">
    <source>
        <dbReference type="PROSITE-ProRule" id="PRU00541"/>
    </source>
</evidence>
<evidence type="ECO:0000255" key="3">
    <source>
        <dbReference type="PROSITE-ProRule" id="PRU00542"/>
    </source>
</evidence>
<evidence type="ECO:0000256" key="4">
    <source>
        <dbReference type="SAM" id="MobiDB-lite"/>
    </source>
</evidence>
<evidence type="ECO:0000269" key="5">
    <source>
    </source>
</evidence>
<evidence type="ECO:0000305" key="6"/>
<evidence type="ECO:0000312" key="7">
    <source>
        <dbReference type="FlyBase" id="FBgn0033160"/>
    </source>
</evidence>
<comment type="function">
    <text evidence="1 5">RNA helicase involved in mRNA processing and antiviral innate immunity (By similarity). Acts as an activator of the p38 MAPK cascade (PubMed:24782566).</text>
</comment>
<comment type="catalytic activity">
    <reaction evidence="1">
        <text>ATP + H2O = ADP + phosphate + H(+)</text>
        <dbReference type="Rhea" id="RHEA:13065"/>
        <dbReference type="ChEBI" id="CHEBI:15377"/>
        <dbReference type="ChEBI" id="CHEBI:15378"/>
        <dbReference type="ChEBI" id="CHEBI:30616"/>
        <dbReference type="ChEBI" id="CHEBI:43474"/>
        <dbReference type="ChEBI" id="CHEBI:456216"/>
        <dbReference type="EC" id="3.6.4.13"/>
    </reaction>
</comment>
<comment type="similarity">
    <text evidence="6">Belongs to the DEAD box helicase family. DEAH subfamily. DDX15/PRP43 sub-subfamily.</text>
</comment>
<name>DHX15_DROME</name>
<sequence>MSKRRIEVGETYGSKAKKDPEASSSSAAAAAGTVAQILGGFVPNKQPPTMNPLTNTPYSQRYQNLYKKRIALPVFEYQADFMRLLSLHQCIVLVGETGSGKTTQIPQWCVDFAVSKGRKGVSCTQPRRVAAMSVAQRVSEEMDVKLGEEVGYSIRFEDCSTAKTLLKYMTDGMLLREAMSDPMLDQYQVILLDEAHERTLATDILMGVLKEVIRQRSDLKLVVMSATLDAGKFQQYFDNAPLMKVPGRTHPVEIFYTPEPERDYLEAAIRTVIQIHMCEEIEGDILMFLTGQEEIEEACKRIKREIDNLGSEIGELKCIPLYSTLPPNLQQRIFEPAPPPNANGAIGRKVVVSTNIAETSLTIDGVVFVIDPGFAKQKVYNPRIRVESLLVSPISKASAQQRSGRAGRTRPGKCFRLYTEKAFKNEMQDNTYPEILRSNLGTVVLQLKKLGIDDLVHFDFMDPPAPETLMRALELLNYLAALDDDGNLTDLGAVMSEFPLDPQLAKMLIASCQHNCSNEILSITAMLSVPQCFVRPNEAKKAADEAKMRFAHIDGDHLTLLNVYHAFKQSSEDPNWCYENFINFRSLKSADNVRQQLARIMDRFNLRRTSTEFTSKDYYVNIRKALVQGFFMQVAHLERTGYYLTIKDNQNVQLHPSTCLDHKPDWVIYNEFVLTTKNYIRTVTDVKPEWLCCLAPQYYDLNNFPQCEAKRQLELLQQRLETKQYQKGF</sequence>
<proteinExistence type="evidence at transcript level"/>